<protein>
    <recommendedName>
        <fullName evidence="1">Protein translocase subunit SecA</fullName>
        <ecNumber evidence="1">7.4.2.8</ecNumber>
    </recommendedName>
</protein>
<feature type="chain" id="PRO_1000215117" description="Protein translocase subunit SecA">
    <location>
        <begin position="1"/>
        <end position="906"/>
    </location>
</feature>
<feature type="region of interest" description="Disordered" evidence="2">
    <location>
        <begin position="862"/>
        <end position="886"/>
    </location>
</feature>
<feature type="binding site" evidence="1">
    <location>
        <position position="86"/>
    </location>
    <ligand>
        <name>ATP</name>
        <dbReference type="ChEBI" id="CHEBI:30616"/>
    </ligand>
</feature>
<feature type="binding site" evidence="1">
    <location>
        <begin position="104"/>
        <end position="108"/>
    </location>
    <ligand>
        <name>ATP</name>
        <dbReference type="ChEBI" id="CHEBI:30616"/>
    </ligand>
</feature>
<feature type="binding site" evidence="1">
    <location>
        <position position="499"/>
    </location>
    <ligand>
        <name>ATP</name>
        <dbReference type="ChEBI" id="CHEBI:30616"/>
    </ligand>
</feature>
<feature type="binding site" evidence="1">
    <location>
        <position position="890"/>
    </location>
    <ligand>
        <name>Zn(2+)</name>
        <dbReference type="ChEBI" id="CHEBI:29105"/>
    </ligand>
</feature>
<feature type="binding site" evidence="1">
    <location>
        <position position="892"/>
    </location>
    <ligand>
        <name>Zn(2+)</name>
        <dbReference type="ChEBI" id="CHEBI:29105"/>
    </ligand>
</feature>
<feature type="binding site" evidence="1">
    <location>
        <position position="901"/>
    </location>
    <ligand>
        <name>Zn(2+)</name>
        <dbReference type="ChEBI" id="CHEBI:29105"/>
    </ligand>
</feature>
<feature type="binding site" evidence="1">
    <location>
        <position position="902"/>
    </location>
    <ligand>
        <name>Zn(2+)</name>
        <dbReference type="ChEBI" id="CHEBI:29105"/>
    </ligand>
</feature>
<accession>C3PP10</accession>
<proteinExistence type="inferred from homology"/>
<reference key="1">
    <citation type="journal article" date="2009" name="BMC Genomics">
        <title>Analysis of the Rickettsia africae genome reveals that virulence acquisition in Rickettsia species may be explained by genome reduction.</title>
        <authorList>
            <person name="Fournier P.-E."/>
            <person name="El Karkouri K."/>
            <person name="Leroy Q."/>
            <person name="Robert C."/>
            <person name="Giumelli B."/>
            <person name="Renesto P."/>
            <person name="Socolovschi C."/>
            <person name="Parola P."/>
            <person name="Audic S."/>
            <person name="Raoult D."/>
        </authorList>
    </citation>
    <scope>NUCLEOTIDE SEQUENCE [LARGE SCALE GENOMIC DNA]</scope>
    <source>
        <strain>ESF-5</strain>
    </source>
</reference>
<gene>
    <name evidence="1" type="primary">secA</name>
    <name type="ordered locus">RAF_ORF0796</name>
</gene>
<comment type="function">
    <text evidence="1">Part of the Sec protein translocase complex. Interacts with the SecYEG preprotein conducting channel. Has a central role in coupling the hydrolysis of ATP to the transfer of proteins into and across the cell membrane, serving both as a receptor for the preprotein-SecB complex and as an ATP-driven molecular motor driving the stepwise translocation of polypeptide chains across the membrane.</text>
</comment>
<comment type="catalytic activity">
    <reaction evidence="1">
        <text>ATP + H2O + cellular proteinSide 1 = ADP + phosphate + cellular proteinSide 2.</text>
        <dbReference type="EC" id="7.4.2.8"/>
    </reaction>
</comment>
<comment type="cofactor">
    <cofactor evidence="1">
        <name>Zn(2+)</name>
        <dbReference type="ChEBI" id="CHEBI:29105"/>
    </cofactor>
    <text evidence="1">May bind 1 zinc ion per subunit.</text>
</comment>
<comment type="subunit">
    <text evidence="1">Monomer and homodimer. Part of the essential Sec protein translocation apparatus which comprises SecA, SecYEG and auxiliary proteins SecDF-YajC and YidC.</text>
</comment>
<comment type="subcellular location">
    <subcellularLocation>
        <location evidence="1">Cell inner membrane</location>
        <topology evidence="1">Peripheral membrane protein</topology>
        <orientation evidence="1">Cytoplasmic side</orientation>
    </subcellularLocation>
    <subcellularLocation>
        <location evidence="1">Cytoplasm</location>
    </subcellularLocation>
    <text evidence="1">Distribution is 50-50.</text>
</comment>
<comment type="similarity">
    <text evidence="1">Belongs to the SecA family.</text>
</comment>
<sequence length="906" mass="103234">MLSILKKLFGTANDRTVKKLFSEITKINSLEPAIQKLSDEELKNKTVEFKEKLKNGATLDDIVYEAFAVVREAAKRVCGMRHFDVQLIGGLILHRGMITEMRTGEGKTLVATLPAYLNALTGKGVHVVTVNDYLARRDSASMGKIYNFLGLSVGCIVGGMPDEVKRAAYNADITHATNNELGFDYLRDNMKYSLQERVLRPFNFAIIDEVDSILIDEARTPLVISGPVNDNAELYGKIDKIVRLLNASDFEKDEKLKTINLTETGITHIESLLSKESIIKPDTSLYDFENLTLVHYVNQALRAHNMFTVNVDYLVREGKVMIIDEFTGRVMEGRRYSEGLHQALEAKENVKIQNENQTLASITFQNYFRNYPKLSGMTGTAMTEAPELKDIYNLDVVAVPTHNKVTRLDLDDEIYGSKKEKYDAILKLIRDCYDRGQPILVGTISIEKSEELSSVLNKEKIPHKVLNAKFHEQEAFIIAQAGRFKAVTIATNMAGRGTDIMLGGNPEMLIEQLDKAHNYEAKVAEIKAQIAEEKKQVIEAGGLFVIGTERHESRRIDNQLRGRSGRQGDPGKTKFFLSLDDDLMRIFASDRISGVLRTLGLKDGEAIHHPMISRSLEKAQQKVEGHNYEMRKNLLRFDDVMNDQRKIIYEQRTEIIKSKDSHGFLNSTTEELAQKIVLTFMPVGSYREDWDIENLSVELHRVFSIKFDHNVVSKNDVTEEEITKTVIQMAHDIYKSKEEAYSSELMHNAVKYILLTTLDQVWKDHLYSLDHLRQGISLRAYGQKDPLSEYKREAFNLFEQMLNNLKELFIQTVYHFHIDLKNVQKEDVSLEYKKLQKNMRESREDPAFSKYNAGSSIETDLKPVVSRIDPKDRNPDDPTSWGRVSRNELCPCGSGKKYKYCHGANE</sequence>
<organism>
    <name type="scientific">Rickettsia africae (strain ESF-5)</name>
    <dbReference type="NCBI Taxonomy" id="347255"/>
    <lineage>
        <taxon>Bacteria</taxon>
        <taxon>Pseudomonadati</taxon>
        <taxon>Pseudomonadota</taxon>
        <taxon>Alphaproteobacteria</taxon>
        <taxon>Rickettsiales</taxon>
        <taxon>Rickettsiaceae</taxon>
        <taxon>Rickettsieae</taxon>
        <taxon>Rickettsia</taxon>
        <taxon>spotted fever group</taxon>
    </lineage>
</organism>
<keyword id="KW-0067">ATP-binding</keyword>
<keyword id="KW-0997">Cell inner membrane</keyword>
<keyword id="KW-1003">Cell membrane</keyword>
<keyword id="KW-0963">Cytoplasm</keyword>
<keyword id="KW-0472">Membrane</keyword>
<keyword id="KW-0479">Metal-binding</keyword>
<keyword id="KW-0547">Nucleotide-binding</keyword>
<keyword id="KW-0653">Protein transport</keyword>
<keyword id="KW-1278">Translocase</keyword>
<keyword id="KW-0811">Translocation</keyword>
<keyword id="KW-0813">Transport</keyword>
<keyword id="KW-0862">Zinc</keyword>
<dbReference type="EC" id="7.4.2.8" evidence="1"/>
<dbReference type="EMBL" id="CP001612">
    <property type="protein sequence ID" value="ACP53670.1"/>
    <property type="molecule type" value="Genomic_DNA"/>
</dbReference>
<dbReference type="RefSeq" id="WP_012719860.1">
    <property type="nucleotide sequence ID" value="NC_012633.1"/>
</dbReference>
<dbReference type="SMR" id="C3PP10"/>
<dbReference type="KEGG" id="raf:RAF_ORF0796"/>
<dbReference type="HOGENOM" id="CLU_005314_3_0_5"/>
<dbReference type="Proteomes" id="UP000002305">
    <property type="component" value="Chromosome"/>
</dbReference>
<dbReference type="GO" id="GO:0031522">
    <property type="term" value="C:cell envelope Sec protein transport complex"/>
    <property type="evidence" value="ECO:0007669"/>
    <property type="project" value="TreeGrafter"/>
</dbReference>
<dbReference type="GO" id="GO:0005829">
    <property type="term" value="C:cytosol"/>
    <property type="evidence" value="ECO:0007669"/>
    <property type="project" value="TreeGrafter"/>
</dbReference>
<dbReference type="GO" id="GO:0005886">
    <property type="term" value="C:plasma membrane"/>
    <property type="evidence" value="ECO:0007669"/>
    <property type="project" value="UniProtKB-SubCell"/>
</dbReference>
<dbReference type="GO" id="GO:0005524">
    <property type="term" value="F:ATP binding"/>
    <property type="evidence" value="ECO:0007669"/>
    <property type="project" value="UniProtKB-UniRule"/>
</dbReference>
<dbReference type="GO" id="GO:0046872">
    <property type="term" value="F:metal ion binding"/>
    <property type="evidence" value="ECO:0007669"/>
    <property type="project" value="UniProtKB-KW"/>
</dbReference>
<dbReference type="GO" id="GO:0008564">
    <property type="term" value="F:protein-exporting ATPase activity"/>
    <property type="evidence" value="ECO:0007669"/>
    <property type="project" value="UniProtKB-EC"/>
</dbReference>
<dbReference type="GO" id="GO:0065002">
    <property type="term" value="P:intracellular protein transmembrane transport"/>
    <property type="evidence" value="ECO:0007669"/>
    <property type="project" value="UniProtKB-UniRule"/>
</dbReference>
<dbReference type="GO" id="GO:0017038">
    <property type="term" value="P:protein import"/>
    <property type="evidence" value="ECO:0007669"/>
    <property type="project" value="InterPro"/>
</dbReference>
<dbReference type="GO" id="GO:0006605">
    <property type="term" value="P:protein targeting"/>
    <property type="evidence" value="ECO:0007669"/>
    <property type="project" value="UniProtKB-UniRule"/>
</dbReference>
<dbReference type="GO" id="GO:0043952">
    <property type="term" value="P:protein transport by the Sec complex"/>
    <property type="evidence" value="ECO:0007669"/>
    <property type="project" value="TreeGrafter"/>
</dbReference>
<dbReference type="CDD" id="cd17928">
    <property type="entry name" value="DEXDc_SecA"/>
    <property type="match status" value="1"/>
</dbReference>
<dbReference type="CDD" id="cd18803">
    <property type="entry name" value="SF2_C_secA"/>
    <property type="match status" value="1"/>
</dbReference>
<dbReference type="FunFam" id="3.40.50.300:FF:000113">
    <property type="entry name" value="Preprotein translocase subunit SecA"/>
    <property type="match status" value="1"/>
</dbReference>
<dbReference type="FunFam" id="3.90.1440.10:FF:000001">
    <property type="entry name" value="Preprotein translocase subunit SecA"/>
    <property type="match status" value="1"/>
</dbReference>
<dbReference type="FunFam" id="1.10.3060.10:FF:000003">
    <property type="entry name" value="Protein translocase subunit SecA"/>
    <property type="match status" value="1"/>
</dbReference>
<dbReference type="FunFam" id="3.40.50.300:FF:000334">
    <property type="entry name" value="Protein translocase subunit SecA"/>
    <property type="match status" value="1"/>
</dbReference>
<dbReference type="Gene3D" id="1.10.3060.10">
    <property type="entry name" value="Helical scaffold and wing domains of SecA"/>
    <property type="match status" value="1"/>
</dbReference>
<dbReference type="Gene3D" id="3.40.50.300">
    <property type="entry name" value="P-loop containing nucleotide triphosphate hydrolases"/>
    <property type="match status" value="2"/>
</dbReference>
<dbReference type="Gene3D" id="3.90.1440.10">
    <property type="entry name" value="SecA, preprotein cross-linking domain"/>
    <property type="match status" value="1"/>
</dbReference>
<dbReference type="HAMAP" id="MF_01382">
    <property type="entry name" value="SecA"/>
    <property type="match status" value="1"/>
</dbReference>
<dbReference type="InterPro" id="IPR014001">
    <property type="entry name" value="Helicase_ATP-bd"/>
</dbReference>
<dbReference type="InterPro" id="IPR027417">
    <property type="entry name" value="P-loop_NTPase"/>
</dbReference>
<dbReference type="InterPro" id="IPR004027">
    <property type="entry name" value="SEC_C_motif"/>
</dbReference>
<dbReference type="InterPro" id="IPR000185">
    <property type="entry name" value="SecA"/>
</dbReference>
<dbReference type="InterPro" id="IPR020937">
    <property type="entry name" value="SecA_CS"/>
</dbReference>
<dbReference type="InterPro" id="IPR011115">
    <property type="entry name" value="SecA_DEAD"/>
</dbReference>
<dbReference type="InterPro" id="IPR014018">
    <property type="entry name" value="SecA_motor_DEAD"/>
</dbReference>
<dbReference type="InterPro" id="IPR011130">
    <property type="entry name" value="SecA_preprotein_X-link_dom"/>
</dbReference>
<dbReference type="InterPro" id="IPR044722">
    <property type="entry name" value="SecA_SF2_C"/>
</dbReference>
<dbReference type="InterPro" id="IPR011116">
    <property type="entry name" value="SecA_Wing/Scaffold"/>
</dbReference>
<dbReference type="InterPro" id="IPR036266">
    <property type="entry name" value="SecA_Wing/Scaffold_sf"/>
</dbReference>
<dbReference type="InterPro" id="IPR036670">
    <property type="entry name" value="SecA_X-link_sf"/>
</dbReference>
<dbReference type="NCBIfam" id="NF009538">
    <property type="entry name" value="PRK12904.1"/>
    <property type="match status" value="1"/>
</dbReference>
<dbReference type="NCBIfam" id="TIGR00963">
    <property type="entry name" value="secA"/>
    <property type="match status" value="1"/>
</dbReference>
<dbReference type="PANTHER" id="PTHR30612:SF0">
    <property type="entry name" value="CHLOROPLAST PROTEIN-TRANSPORTING ATPASE"/>
    <property type="match status" value="1"/>
</dbReference>
<dbReference type="PANTHER" id="PTHR30612">
    <property type="entry name" value="SECA INNER MEMBRANE COMPONENT OF SEC PROTEIN SECRETION SYSTEM"/>
    <property type="match status" value="1"/>
</dbReference>
<dbReference type="Pfam" id="PF21090">
    <property type="entry name" value="P-loop_SecA"/>
    <property type="match status" value="1"/>
</dbReference>
<dbReference type="Pfam" id="PF02810">
    <property type="entry name" value="SEC-C"/>
    <property type="match status" value="1"/>
</dbReference>
<dbReference type="Pfam" id="PF07517">
    <property type="entry name" value="SecA_DEAD"/>
    <property type="match status" value="1"/>
</dbReference>
<dbReference type="Pfam" id="PF01043">
    <property type="entry name" value="SecA_PP_bind"/>
    <property type="match status" value="1"/>
</dbReference>
<dbReference type="Pfam" id="PF07516">
    <property type="entry name" value="SecA_SW"/>
    <property type="match status" value="1"/>
</dbReference>
<dbReference type="PRINTS" id="PR00906">
    <property type="entry name" value="SECA"/>
</dbReference>
<dbReference type="SMART" id="SM00957">
    <property type="entry name" value="SecA_DEAD"/>
    <property type="match status" value="1"/>
</dbReference>
<dbReference type="SMART" id="SM00958">
    <property type="entry name" value="SecA_PP_bind"/>
    <property type="match status" value="1"/>
</dbReference>
<dbReference type="SUPFAM" id="SSF81886">
    <property type="entry name" value="Helical scaffold and wing domains of SecA"/>
    <property type="match status" value="1"/>
</dbReference>
<dbReference type="SUPFAM" id="SSF52540">
    <property type="entry name" value="P-loop containing nucleoside triphosphate hydrolases"/>
    <property type="match status" value="2"/>
</dbReference>
<dbReference type="SUPFAM" id="SSF81767">
    <property type="entry name" value="Pre-protein crosslinking domain of SecA"/>
    <property type="match status" value="1"/>
</dbReference>
<dbReference type="PROSITE" id="PS01312">
    <property type="entry name" value="SECA"/>
    <property type="match status" value="1"/>
</dbReference>
<dbReference type="PROSITE" id="PS51196">
    <property type="entry name" value="SECA_MOTOR_DEAD"/>
    <property type="match status" value="1"/>
</dbReference>
<evidence type="ECO:0000255" key="1">
    <source>
        <dbReference type="HAMAP-Rule" id="MF_01382"/>
    </source>
</evidence>
<evidence type="ECO:0000256" key="2">
    <source>
        <dbReference type="SAM" id="MobiDB-lite"/>
    </source>
</evidence>
<name>SECA_RICAE</name>